<protein>
    <recommendedName>
        <fullName>Probable endopeptidase YafL</fullName>
        <ecNumber>3.4.-.-</ecNumber>
    </recommendedName>
    <alternativeName>
        <fullName>Uncharacterized lipoprotein YafL</fullName>
    </alternativeName>
</protein>
<evidence type="ECO:0000255" key="1"/>
<evidence type="ECO:0000255" key="2">
    <source>
        <dbReference type="PROSITE-ProRule" id="PRU01284"/>
    </source>
</evidence>
<evidence type="ECO:0000305" key="3"/>
<name>YAFL_ECOLI</name>
<feature type="signal peptide" evidence="1">
    <location>
        <begin position="1"/>
        <end position="17"/>
    </location>
</feature>
<feature type="chain" id="PRO_0000019767" description="Probable endopeptidase YafL">
    <location>
        <begin position="18"/>
        <end position="249"/>
    </location>
</feature>
<feature type="domain" description="NlpC/P60" evidence="2">
    <location>
        <begin position="116"/>
        <end position="243"/>
    </location>
</feature>
<feature type="active site" description="Nucleophile" evidence="2">
    <location>
        <position position="147"/>
    </location>
</feature>
<feature type="active site" description="Proton acceptor" evidence="2">
    <location>
        <position position="202"/>
    </location>
</feature>
<feature type="active site" evidence="2">
    <location>
        <position position="214"/>
    </location>
</feature>
<feature type="lipid moiety-binding region" description="N-palmitoyl cysteine" evidence="1">
    <location>
        <position position="18"/>
    </location>
</feature>
<feature type="lipid moiety-binding region" description="S-diacylglycerol cysteine" evidence="1">
    <location>
        <position position="18"/>
    </location>
</feature>
<organism>
    <name type="scientific">Escherichia coli (strain K12)</name>
    <dbReference type="NCBI Taxonomy" id="83333"/>
    <lineage>
        <taxon>Bacteria</taxon>
        <taxon>Pseudomonadati</taxon>
        <taxon>Pseudomonadota</taxon>
        <taxon>Gammaproteobacteria</taxon>
        <taxon>Enterobacterales</taxon>
        <taxon>Enterobacteriaceae</taxon>
        <taxon>Escherichia</taxon>
    </lineage>
</organism>
<sequence length="249" mass="28785">MSLPSIPSFVLSGLLLICLPFSSFASATTSHISFSYAARQRMQNRARLLKQYQTHLKKQASYIVEGNAESKRALRQHNREQIKQHPEWFPAPLKASDRRWQALAENNHFLSSDHLHNITEVAIHRLEQQLGKPYVWGGTRPDKGFDCSGLVFYAYNKILEAKLPRTANEMYHYRRATIVANNDLRRGDLLFFHIHSREIADHMGVYLGDGQFIESPRTGETIRISRLAEPFWQDHFLGARRILTEETIL</sequence>
<keyword id="KW-1003">Cell membrane</keyword>
<keyword id="KW-0378">Hydrolase</keyword>
<keyword id="KW-0449">Lipoprotein</keyword>
<keyword id="KW-0472">Membrane</keyword>
<keyword id="KW-0564">Palmitate</keyword>
<keyword id="KW-0645">Protease</keyword>
<keyword id="KW-1185">Reference proteome</keyword>
<keyword id="KW-0732">Signal</keyword>
<keyword id="KW-0788">Thiol protease</keyword>
<dbReference type="EC" id="3.4.-.-"/>
<dbReference type="EMBL" id="D38582">
    <property type="protein sequence ID" value="BAA07589.1"/>
    <property type="molecule type" value="Genomic_DNA"/>
</dbReference>
<dbReference type="EMBL" id="U70214">
    <property type="protein sequence ID" value="AAB08647.1"/>
    <property type="molecule type" value="Genomic_DNA"/>
</dbReference>
<dbReference type="EMBL" id="U00096">
    <property type="protein sequence ID" value="AAC73331.1"/>
    <property type="molecule type" value="Genomic_DNA"/>
</dbReference>
<dbReference type="EMBL" id="AP009048">
    <property type="protein sequence ID" value="BAA77897.2"/>
    <property type="molecule type" value="Genomic_DNA"/>
</dbReference>
<dbReference type="PIR" id="D64747">
    <property type="entry name" value="D64747"/>
</dbReference>
<dbReference type="RefSeq" id="NP_414762.1">
    <property type="nucleotide sequence ID" value="NC_000913.3"/>
</dbReference>
<dbReference type="RefSeq" id="WP_000056849.1">
    <property type="nucleotide sequence ID" value="NZ_SSZK01000029.1"/>
</dbReference>
<dbReference type="SMR" id="Q47151"/>
<dbReference type="BioGRID" id="4259761">
    <property type="interactions" value="269"/>
</dbReference>
<dbReference type="FunCoup" id="Q47151">
    <property type="interactions" value="109"/>
</dbReference>
<dbReference type="IntAct" id="Q47151">
    <property type="interactions" value="6"/>
</dbReference>
<dbReference type="STRING" id="511145.b0227"/>
<dbReference type="PaxDb" id="511145-b0227"/>
<dbReference type="EnsemblBacteria" id="AAC73331">
    <property type="protein sequence ID" value="AAC73331"/>
    <property type="gene ID" value="b0227"/>
</dbReference>
<dbReference type="GeneID" id="944899"/>
<dbReference type="KEGG" id="ecj:JW0217"/>
<dbReference type="KEGG" id="eco:b0227"/>
<dbReference type="KEGG" id="ecoc:C3026_01075"/>
<dbReference type="KEGG" id="ecoc:C3026_23815"/>
<dbReference type="PATRIC" id="fig|511145.12.peg.229"/>
<dbReference type="EchoBASE" id="EB2943"/>
<dbReference type="eggNOG" id="COG0791">
    <property type="taxonomic scope" value="Bacteria"/>
</dbReference>
<dbReference type="HOGENOM" id="CLU_016043_2_1_6"/>
<dbReference type="InParanoid" id="Q47151"/>
<dbReference type="OMA" id="ANDRRWQ"/>
<dbReference type="OrthoDB" id="9807055at2"/>
<dbReference type="PhylomeDB" id="Q47151"/>
<dbReference type="BioCyc" id="EcoCyc:G6111-MONOMER"/>
<dbReference type="PRO" id="PR:Q47151"/>
<dbReference type="Proteomes" id="UP000000625">
    <property type="component" value="Chromosome"/>
</dbReference>
<dbReference type="GO" id="GO:0005886">
    <property type="term" value="C:plasma membrane"/>
    <property type="evidence" value="ECO:0007669"/>
    <property type="project" value="UniProtKB-SubCell"/>
</dbReference>
<dbReference type="GO" id="GO:0008234">
    <property type="term" value="F:cysteine-type peptidase activity"/>
    <property type="evidence" value="ECO:0007669"/>
    <property type="project" value="UniProtKB-KW"/>
</dbReference>
<dbReference type="GO" id="GO:0004175">
    <property type="term" value="F:endopeptidase activity"/>
    <property type="evidence" value="ECO:0000318"/>
    <property type="project" value="GO_Central"/>
</dbReference>
<dbReference type="GO" id="GO:0000270">
    <property type="term" value="P:peptidoglycan metabolic process"/>
    <property type="evidence" value="ECO:0000318"/>
    <property type="project" value="GO_Central"/>
</dbReference>
<dbReference type="GO" id="GO:0006508">
    <property type="term" value="P:proteolysis"/>
    <property type="evidence" value="ECO:0007669"/>
    <property type="project" value="UniProtKB-KW"/>
</dbReference>
<dbReference type="Gene3D" id="3.90.1720.10">
    <property type="entry name" value="endopeptidase domain like (from Nostoc punctiforme)"/>
    <property type="match status" value="1"/>
</dbReference>
<dbReference type="InterPro" id="IPR000064">
    <property type="entry name" value="NLP_P60_dom"/>
</dbReference>
<dbReference type="InterPro" id="IPR038765">
    <property type="entry name" value="Papain-like_cys_pep_sf"/>
</dbReference>
<dbReference type="InterPro" id="IPR051202">
    <property type="entry name" value="Peptidase_C40"/>
</dbReference>
<dbReference type="PANTHER" id="PTHR47053">
    <property type="entry name" value="MUREIN DD-ENDOPEPTIDASE MEPH-RELATED"/>
    <property type="match status" value="1"/>
</dbReference>
<dbReference type="PANTHER" id="PTHR47053:SF1">
    <property type="entry name" value="MUREIN DD-ENDOPEPTIDASE MEPH-RELATED"/>
    <property type="match status" value="1"/>
</dbReference>
<dbReference type="Pfam" id="PF00877">
    <property type="entry name" value="NLPC_P60"/>
    <property type="match status" value="1"/>
</dbReference>
<dbReference type="SUPFAM" id="SSF54001">
    <property type="entry name" value="Cysteine proteinases"/>
    <property type="match status" value="1"/>
</dbReference>
<dbReference type="PROSITE" id="PS51935">
    <property type="entry name" value="NLPC_P60"/>
    <property type="match status" value="1"/>
</dbReference>
<comment type="subcellular location">
    <subcellularLocation>
        <location evidence="3">Cell membrane</location>
        <topology evidence="3">Lipid-anchor</topology>
    </subcellularLocation>
</comment>
<comment type="similarity">
    <text evidence="2 3">Belongs to the peptidase C40 family.</text>
</comment>
<reference key="1">
    <citation type="journal article" date="1995" name="Mutat. Res.">
        <title>dinP, a new gene in Escherichia coli, whose product shows similarities to UmuC and its homologues.</title>
        <authorList>
            <person name="Ohmori H."/>
            <person name="Hatada E."/>
            <person name="Qiao Y."/>
            <person name="Tsuji M."/>
            <person name="Fukuda R."/>
        </authorList>
    </citation>
    <scope>NUCLEOTIDE SEQUENCE [GENOMIC DNA]</scope>
    <source>
        <strain>K12 / W3110 / ATCC 27325 / DSM 5911</strain>
    </source>
</reference>
<reference key="2">
    <citation type="submission" date="1996-02" db="EMBL/GenBank/DDBJ databases">
        <title>Systematic sequencing of the Escherichia coli genome: analysis of the 4.0 - 6.0 min (189,987 - 281,416bp) region.</title>
        <authorList>
            <person name="Takemoto K."/>
            <person name="Mori H."/>
            <person name="Murayama N."/>
            <person name="Kataoka K."/>
            <person name="Yano M."/>
            <person name="Itoh T."/>
            <person name="Yamamoto Y."/>
            <person name="Inokuchi H."/>
            <person name="Miki T."/>
            <person name="Hatada E."/>
            <person name="Fukuda R."/>
            <person name="Ichihara S."/>
            <person name="Mizuno T."/>
            <person name="Makino K."/>
            <person name="Nakata A."/>
            <person name="Yura T."/>
            <person name="Sampei G."/>
            <person name="Mizobuchi K."/>
        </authorList>
    </citation>
    <scope>NUCLEOTIDE SEQUENCE [LARGE SCALE GENOMIC DNA]</scope>
    <source>
        <strain>K12 / W3110 / ATCC 27325 / DSM 5911</strain>
    </source>
</reference>
<reference key="3">
    <citation type="submission" date="1997-01" db="EMBL/GenBank/DDBJ databases">
        <title>Sequence of minutes 4-25 of Escherichia coli.</title>
        <authorList>
            <person name="Chung E."/>
            <person name="Allen E."/>
            <person name="Araujo R."/>
            <person name="Aparicio A.M."/>
            <person name="Davis K."/>
            <person name="Duncan M."/>
            <person name="Federspiel N."/>
            <person name="Hyman R."/>
            <person name="Kalman S."/>
            <person name="Komp C."/>
            <person name="Kurdi O."/>
            <person name="Lew H."/>
            <person name="Lin D."/>
            <person name="Namath A."/>
            <person name="Oefner P."/>
            <person name="Roberts D."/>
            <person name="Schramm S."/>
            <person name="Davis R.W."/>
        </authorList>
    </citation>
    <scope>NUCLEOTIDE SEQUENCE [LARGE SCALE GENOMIC DNA]</scope>
    <source>
        <strain>K12 / MG1655 / ATCC 47076</strain>
    </source>
</reference>
<reference key="4">
    <citation type="journal article" date="1997" name="Science">
        <title>The complete genome sequence of Escherichia coli K-12.</title>
        <authorList>
            <person name="Blattner F.R."/>
            <person name="Plunkett G. III"/>
            <person name="Bloch C.A."/>
            <person name="Perna N.T."/>
            <person name="Burland V."/>
            <person name="Riley M."/>
            <person name="Collado-Vides J."/>
            <person name="Glasner J.D."/>
            <person name="Rode C.K."/>
            <person name="Mayhew G.F."/>
            <person name="Gregor J."/>
            <person name="Davis N.W."/>
            <person name="Kirkpatrick H.A."/>
            <person name="Goeden M.A."/>
            <person name="Rose D.J."/>
            <person name="Mau B."/>
            <person name="Shao Y."/>
        </authorList>
    </citation>
    <scope>NUCLEOTIDE SEQUENCE [LARGE SCALE GENOMIC DNA]</scope>
    <source>
        <strain>K12 / MG1655 / ATCC 47076</strain>
    </source>
</reference>
<reference key="5">
    <citation type="journal article" date="2006" name="Mol. Syst. Biol.">
        <title>Highly accurate genome sequences of Escherichia coli K-12 strains MG1655 and W3110.</title>
        <authorList>
            <person name="Hayashi K."/>
            <person name="Morooka N."/>
            <person name="Yamamoto Y."/>
            <person name="Fujita K."/>
            <person name="Isono K."/>
            <person name="Choi S."/>
            <person name="Ohtsubo E."/>
            <person name="Baba T."/>
            <person name="Wanner B.L."/>
            <person name="Mori H."/>
            <person name="Horiuchi T."/>
        </authorList>
    </citation>
    <scope>NUCLEOTIDE SEQUENCE [LARGE SCALE GENOMIC DNA]</scope>
    <source>
        <strain>K12 / W3110 / ATCC 27325 / DSM 5911</strain>
    </source>
</reference>
<proteinExistence type="inferred from homology"/>
<gene>
    <name type="primary">yafL</name>
    <name type="ordered locus">b0227</name>
    <name type="ordered locus">JW0217</name>
</gene>
<accession>Q47151</accession>
<accession>Q9R2E0</accession>